<feature type="chain" id="PRO_1000084111" description="1-(5-phosphoribosyl)-5-[(5-phosphoribosylamino)methylideneamino] imidazole-4-carboxamide isomerase">
    <location>
        <begin position="1"/>
        <end position="241"/>
    </location>
</feature>
<feature type="active site" description="Proton acceptor" evidence="1">
    <location>
        <position position="10"/>
    </location>
</feature>
<feature type="active site" description="Proton donor" evidence="1">
    <location>
        <position position="129"/>
    </location>
</feature>
<gene>
    <name evidence="1" type="primary">hisA</name>
    <name type="ordered locus">Strop_3190</name>
</gene>
<comment type="catalytic activity">
    <reaction evidence="1">
        <text>1-(5-phospho-beta-D-ribosyl)-5-[(5-phospho-beta-D-ribosylamino)methylideneamino]imidazole-4-carboxamide = 5-[(5-phospho-1-deoxy-D-ribulos-1-ylimino)methylamino]-1-(5-phospho-beta-D-ribosyl)imidazole-4-carboxamide</text>
        <dbReference type="Rhea" id="RHEA:15469"/>
        <dbReference type="ChEBI" id="CHEBI:58435"/>
        <dbReference type="ChEBI" id="CHEBI:58525"/>
        <dbReference type="EC" id="5.3.1.16"/>
    </reaction>
</comment>
<comment type="pathway">
    <text evidence="1">Amino-acid biosynthesis; L-histidine biosynthesis; L-histidine from 5-phospho-alpha-D-ribose 1-diphosphate: step 4/9.</text>
</comment>
<comment type="subcellular location">
    <subcellularLocation>
        <location evidence="1">Cytoplasm</location>
    </subcellularLocation>
</comment>
<comment type="similarity">
    <text evidence="1">Belongs to the HisA/HisF family.</text>
</comment>
<reference key="1">
    <citation type="journal article" date="2007" name="Proc. Natl. Acad. Sci. U.S.A.">
        <title>Genome sequencing reveals complex secondary metabolome in the marine actinomycete Salinispora tropica.</title>
        <authorList>
            <person name="Udwary D.W."/>
            <person name="Zeigler L."/>
            <person name="Asolkar R.N."/>
            <person name="Singan V."/>
            <person name="Lapidus A."/>
            <person name="Fenical W."/>
            <person name="Jensen P.R."/>
            <person name="Moore B.S."/>
        </authorList>
    </citation>
    <scope>NUCLEOTIDE SEQUENCE [LARGE SCALE GENOMIC DNA]</scope>
    <source>
        <strain>ATCC BAA-916 / DSM 44818 / JCM 13857 / NBRC 105044 / CNB-440</strain>
    </source>
</reference>
<proteinExistence type="inferred from homology"/>
<name>HIS4_SALTO</name>
<organism>
    <name type="scientific">Salinispora tropica (strain ATCC BAA-916 / DSM 44818 / JCM 13857 / NBRC 105044 / CNB-440)</name>
    <dbReference type="NCBI Taxonomy" id="369723"/>
    <lineage>
        <taxon>Bacteria</taxon>
        <taxon>Bacillati</taxon>
        <taxon>Actinomycetota</taxon>
        <taxon>Actinomycetes</taxon>
        <taxon>Micromonosporales</taxon>
        <taxon>Micromonosporaceae</taxon>
        <taxon>Salinispora</taxon>
    </lineage>
</organism>
<keyword id="KW-0028">Amino-acid biosynthesis</keyword>
<keyword id="KW-0963">Cytoplasm</keyword>
<keyword id="KW-0368">Histidine biosynthesis</keyword>
<keyword id="KW-0413">Isomerase</keyword>
<keyword id="KW-1185">Reference proteome</keyword>
<dbReference type="EC" id="5.3.1.16" evidence="1"/>
<dbReference type="EMBL" id="CP000667">
    <property type="protein sequence ID" value="ABP55624.1"/>
    <property type="molecule type" value="Genomic_DNA"/>
</dbReference>
<dbReference type="SMR" id="A4X9Q0"/>
<dbReference type="STRING" id="369723.Strop_3190"/>
<dbReference type="KEGG" id="stp:Strop_3190"/>
<dbReference type="PATRIC" id="fig|369723.5.peg.3282"/>
<dbReference type="eggNOG" id="COG0106">
    <property type="taxonomic scope" value="Bacteria"/>
</dbReference>
<dbReference type="HOGENOM" id="CLU_048577_1_1_11"/>
<dbReference type="UniPathway" id="UPA00031">
    <property type="reaction ID" value="UER00009"/>
</dbReference>
<dbReference type="Proteomes" id="UP000000235">
    <property type="component" value="Chromosome"/>
</dbReference>
<dbReference type="GO" id="GO:0005737">
    <property type="term" value="C:cytoplasm"/>
    <property type="evidence" value="ECO:0007669"/>
    <property type="project" value="UniProtKB-SubCell"/>
</dbReference>
<dbReference type="GO" id="GO:0003949">
    <property type="term" value="F:1-(5-phosphoribosyl)-5-[(5-phosphoribosylamino)methylideneamino]imidazole-4-carboxamide isomerase activity"/>
    <property type="evidence" value="ECO:0007669"/>
    <property type="project" value="UniProtKB-UniRule"/>
</dbReference>
<dbReference type="GO" id="GO:0004640">
    <property type="term" value="F:phosphoribosylanthranilate isomerase activity"/>
    <property type="evidence" value="ECO:0007669"/>
    <property type="project" value="InterPro"/>
</dbReference>
<dbReference type="GO" id="GO:0000105">
    <property type="term" value="P:L-histidine biosynthetic process"/>
    <property type="evidence" value="ECO:0007669"/>
    <property type="project" value="UniProtKB-UniRule"/>
</dbReference>
<dbReference type="GO" id="GO:0000162">
    <property type="term" value="P:L-tryptophan biosynthetic process"/>
    <property type="evidence" value="ECO:0007669"/>
    <property type="project" value="InterPro"/>
</dbReference>
<dbReference type="CDD" id="cd04732">
    <property type="entry name" value="HisA"/>
    <property type="match status" value="1"/>
</dbReference>
<dbReference type="FunFam" id="3.20.20.70:FF:000009">
    <property type="entry name" value="1-(5-phosphoribosyl)-5-[(5-phosphoribosylamino)methylideneamino] imidazole-4-carboxamide isomerase"/>
    <property type="match status" value="1"/>
</dbReference>
<dbReference type="Gene3D" id="3.20.20.70">
    <property type="entry name" value="Aldolase class I"/>
    <property type="match status" value="1"/>
</dbReference>
<dbReference type="HAMAP" id="MF_01014">
    <property type="entry name" value="HisA"/>
    <property type="match status" value="1"/>
</dbReference>
<dbReference type="InterPro" id="IPR013785">
    <property type="entry name" value="Aldolase_TIM"/>
</dbReference>
<dbReference type="InterPro" id="IPR006062">
    <property type="entry name" value="His_biosynth"/>
</dbReference>
<dbReference type="InterPro" id="IPR010188">
    <property type="entry name" value="HisA/PriA_Actinobacteria"/>
</dbReference>
<dbReference type="InterPro" id="IPR044524">
    <property type="entry name" value="Isoase_HisA-like"/>
</dbReference>
<dbReference type="InterPro" id="IPR023016">
    <property type="entry name" value="Isoase_HisA-like_bact"/>
</dbReference>
<dbReference type="InterPro" id="IPR011060">
    <property type="entry name" value="RibuloseP-bd_barrel"/>
</dbReference>
<dbReference type="NCBIfam" id="TIGR01919">
    <property type="entry name" value="hisA-trpF"/>
    <property type="match status" value="1"/>
</dbReference>
<dbReference type="PANTHER" id="PTHR43090">
    <property type="entry name" value="1-(5-PHOSPHORIBOSYL)-5-[(5-PHOSPHORIBOSYLAMINO)METHYLIDENEAMINO] IMIDAZOLE-4-CARBOXAMIDE ISOMERASE"/>
    <property type="match status" value="1"/>
</dbReference>
<dbReference type="PANTHER" id="PTHR43090:SF2">
    <property type="entry name" value="1-(5-PHOSPHORIBOSYL)-5-[(5-PHOSPHORIBOSYLAMINO)METHYLIDENEAMINO] IMIDAZOLE-4-CARBOXAMIDE ISOMERASE"/>
    <property type="match status" value="1"/>
</dbReference>
<dbReference type="Pfam" id="PF00977">
    <property type="entry name" value="His_biosynth"/>
    <property type="match status" value="1"/>
</dbReference>
<dbReference type="SUPFAM" id="SSF51366">
    <property type="entry name" value="Ribulose-phoshate binding barrel"/>
    <property type="match status" value="1"/>
</dbReference>
<sequence length="241" mass="25125">MSLTLLPAVDVADGQAVRLVQGAAGSETVYGDPFDAALAWQRDGAEWIHLVDLDAAFGRGSNAELLADVVRRLDVRVELSGGIRDDASLQAALATGAARVNIGTAALEDPQWCDRVCGEYGDRVAIGLDVRGQTLSARGWTRDGGDLWEVLARLDRAGASRYVVTDITKDGTMRGPNLGLLREVCARTNAPVIASGGISTLADLRALAALEPVGVEGVIAGKALYAGAFTVAEALRTLADA</sequence>
<accession>A4X9Q0</accession>
<evidence type="ECO:0000255" key="1">
    <source>
        <dbReference type="HAMAP-Rule" id="MF_01014"/>
    </source>
</evidence>
<protein>
    <recommendedName>
        <fullName evidence="1">1-(5-phosphoribosyl)-5-[(5-phosphoribosylamino)methylideneamino] imidazole-4-carboxamide isomerase</fullName>
        <ecNumber evidence="1">5.3.1.16</ecNumber>
    </recommendedName>
    <alternativeName>
        <fullName evidence="1">Phosphoribosylformimino-5-aminoimidazole carboxamide ribotide isomerase</fullName>
    </alternativeName>
</protein>